<reference key="1">
    <citation type="journal article" date="2008" name="Appl. Environ. Microbiol.">
        <title>Genome of the epsilonproteobacterial chemolithoautotroph Sulfurimonas denitrificans.</title>
        <authorList>
            <person name="Sievert S.M."/>
            <person name="Scott K.M."/>
            <person name="Klotz M.G."/>
            <person name="Chain P.S.G."/>
            <person name="Hauser L.J."/>
            <person name="Hemp J."/>
            <person name="Huegler M."/>
            <person name="Land M."/>
            <person name="Lapidus A."/>
            <person name="Larimer F.W."/>
            <person name="Lucas S."/>
            <person name="Malfatti S.A."/>
            <person name="Meyer F."/>
            <person name="Paulsen I.T."/>
            <person name="Ren Q."/>
            <person name="Simon J."/>
            <person name="Bailey K."/>
            <person name="Diaz E."/>
            <person name="Fitzpatrick K.A."/>
            <person name="Glover B."/>
            <person name="Gwatney N."/>
            <person name="Korajkic A."/>
            <person name="Long A."/>
            <person name="Mobberley J.M."/>
            <person name="Pantry S.N."/>
            <person name="Pazder G."/>
            <person name="Peterson S."/>
            <person name="Quintanilla J.D."/>
            <person name="Sprinkle R."/>
            <person name="Stephens J."/>
            <person name="Thomas P."/>
            <person name="Vaughn R."/>
            <person name="Weber M.J."/>
            <person name="Wooten L.L."/>
        </authorList>
    </citation>
    <scope>NUCLEOTIDE SEQUENCE [LARGE SCALE GENOMIC DNA]</scope>
    <source>
        <strain>ATCC 33889 / DSM 1251</strain>
    </source>
</reference>
<feature type="chain" id="PRO_0000264331" description="Protein-glutamate methylesterase/protein-glutamine glutaminase">
    <location>
        <begin position="1"/>
        <end position="352"/>
    </location>
</feature>
<feature type="domain" description="Response regulatory" evidence="1">
    <location>
        <begin position="4"/>
        <end position="121"/>
    </location>
</feature>
<feature type="domain" description="CheB-type methylesterase" evidence="1">
    <location>
        <begin position="159"/>
        <end position="351"/>
    </location>
</feature>
<feature type="active site" evidence="1">
    <location>
        <position position="171"/>
    </location>
</feature>
<feature type="active site" evidence="1">
    <location>
        <position position="197"/>
    </location>
</feature>
<feature type="active site" evidence="1">
    <location>
        <position position="293"/>
    </location>
</feature>
<feature type="modified residue" description="4-aspartylphosphate" evidence="1">
    <location>
        <position position="55"/>
    </location>
</feature>
<name>CHEB_SULDN</name>
<comment type="function">
    <text evidence="1">Involved in chemotaxis. Part of a chemotaxis signal transduction system that modulates chemotaxis in response to various stimuli. Catalyzes the demethylation of specific methylglutamate residues introduced into the chemoreceptors (methyl-accepting chemotaxis proteins or MCP) by CheR. Also mediates the irreversible deamidation of specific glutamine residues to glutamic acid.</text>
</comment>
<comment type="catalytic activity">
    <reaction evidence="1">
        <text>[protein]-L-glutamate 5-O-methyl ester + H2O = L-glutamyl-[protein] + methanol + H(+)</text>
        <dbReference type="Rhea" id="RHEA:23236"/>
        <dbReference type="Rhea" id="RHEA-COMP:10208"/>
        <dbReference type="Rhea" id="RHEA-COMP:10311"/>
        <dbReference type="ChEBI" id="CHEBI:15377"/>
        <dbReference type="ChEBI" id="CHEBI:15378"/>
        <dbReference type="ChEBI" id="CHEBI:17790"/>
        <dbReference type="ChEBI" id="CHEBI:29973"/>
        <dbReference type="ChEBI" id="CHEBI:82795"/>
        <dbReference type="EC" id="3.1.1.61"/>
    </reaction>
</comment>
<comment type="catalytic activity">
    <reaction evidence="1">
        <text>L-glutaminyl-[protein] + H2O = L-glutamyl-[protein] + NH4(+)</text>
        <dbReference type="Rhea" id="RHEA:16441"/>
        <dbReference type="Rhea" id="RHEA-COMP:10207"/>
        <dbReference type="Rhea" id="RHEA-COMP:10208"/>
        <dbReference type="ChEBI" id="CHEBI:15377"/>
        <dbReference type="ChEBI" id="CHEBI:28938"/>
        <dbReference type="ChEBI" id="CHEBI:29973"/>
        <dbReference type="ChEBI" id="CHEBI:30011"/>
        <dbReference type="EC" id="3.5.1.44"/>
    </reaction>
</comment>
<comment type="subcellular location">
    <subcellularLocation>
        <location evidence="1">Cytoplasm</location>
    </subcellularLocation>
</comment>
<comment type="domain">
    <text evidence="1">Contains a C-terminal catalytic domain, and an N-terminal region which modulates catalytic activity.</text>
</comment>
<comment type="PTM">
    <text evidence="1">Phosphorylated by CheA. Phosphorylation of the N-terminal regulatory domain activates the methylesterase activity.</text>
</comment>
<comment type="similarity">
    <text evidence="1">Belongs to the CheB family.</text>
</comment>
<evidence type="ECO:0000255" key="1">
    <source>
        <dbReference type="HAMAP-Rule" id="MF_00099"/>
    </source>
</evidence>
<organism>
    <name type="scientific">Sulfurimonas denitrificans (strain ATCC 33889 / DSM 1251)</name>
    <name type="common">Thiomicrospira denitrificans (strain ATCC 33889 / DSM 1251)</name>
    <dbReference type="NCBI Taxonomy" id="326298"/>
    <lineage>
        <taxon>Bacteria</taxon>
        <taxon>Pseudomonadati</taxon>
        <taxon>Campylobacterota</taxon>
        <taxon>Epsilonproteobacteria</taxon>
        <taxon>Campylobacterales</taxon>
        <taxon>Sulfurimonadaceae</taxon>
        <taxon>Sulfurimonas</taxon>
    </lineage>
</organism>
<dbReference type="EC" id="3.1.1.61" evidence="1"/>
<dbReference type="EC" id="3.5.1.44" evidence="1"/>
<dbReference type="EMBL" id="CP000153">
    <property type="protein sequence ID" value="ABB44256.1"/>
    <property type="molecule type" value="Genomic_DNA"/>
</dbReference>
<dbReference type="RefSeq" id="WP_011372608.1">
    <property type="nucleotide sequence ID" value="NC_007575.1"/>
</dbReference>
<dbReference type="SMR" id="Q30RX5"/>
<dbReference type="STRING" id="326298.Suden_0978"/>
<dbReference type="KEGG" id="tdn:Suden_0978"/>
<dbReference type="eggNOG" id="COG2201">
    <property type="taxonomic scope" value="Bacteria"/>
</dbReference>
<dbReference type="HOGENOM" id="CLU_000445_51_0_7"/>
<dbReference type="OrthoDB" id="9793421at2"/>
<dbReference type="Proteomes" id="UP000002714">
    <property type="component" value="Chromosome"/>
</dbReference>
<dbReference type="GO" id="GO:0005737">
    <property type="term" value="C:cytoplasm"/>
    <property type="evidence" value="ECO:0007669"/>
    <property type="project" value="UniProtKB-SubCell"/>
</dbReference>
<dbReference type="GO" id="GO:0000156">
    <property type="term" value="F:phosphorelay response regulator activity"/>
    <property type="evidence" value="ECO:0007669"/>
    <property type="project" value="InterPro"/>
</dbReference>
<dbReference type="GO" id="GO:0008984">
    <property type="term" value="F:protein-glutamate methylesterase activity"/>
    <property type="evidence" value="ECO:0007669"/>
    <property type="project" value="UniProtKB-UniRule"/>
</dbReference>
<dbReference type="GO" id="GO:0050568">
    <property type="term" value="F:protein-glutamine glutaminase activity"/>
    <property type="evidence" value="ECO:0007669"/>
    <property type="project" value="UniProtKB-UniRule"/>
</dbReference>
<dbReference type="GO" id="GO:0006935">
    <property type="term" value="P:chemotaxis"/>
    <property type="evidence" value="ECO:0007669"/>
    <property type="project" value="UniProtKB-UniRule"/>
</dbReference>
<dbReference type="CDD" id="cd16432">
    <property type="entry name" value="CheB_Rec"/>
    <property type="match status" value="1"/>
</dbReference>
<dbReference type="CDD" id="cd17541">
    <property type="entry name" value="REC_CheB-like"/>
    <property type="match status" value="1"/>
</dbReference>
<dbReference type="Gene3D" id="3.40.50.2300">
    <property type="match status" value="1"/>
</dbReference>
<dbReference type="Gene3D" id="3.40.50.180">
    <property type="entry name" value="Methylesterase CheB, C-terminal domain"/>
    <property type="match status" value="1"/>
</dbReference>
<dbReference type="HAMAP" id="MF_00099">
    <property type="entry name" value="CheB_chemtxs"/>
    <property type="match status" value="1"/>
</dbReference>
<dbReference type="InterPro" id="IPR008248">
    <property type="entry name" value="CheB-like"/>
</dbReference>
<dbReference type="InterPro" id="IPR035909">
    <property type="entry name" value="CheB_C"/>
</dbReference>
<dbReference type="InterPro" id="IPR011006">
    <property type="entry name" value="CheY-like_superfamily"/>
</dbReference>
<dbReference type="InterPro" id="IPR000673">
    <property type="entry name" value="Sig_transdc_resp-reg_Me-estase"/>
</dbReference>
<dbReference type="InterPro" id="IPR001789">
    <property type="entry name" value="Sig_transdc_resp-reg_receiver"/>
</dbReference>
<dbReference type="NCBIfam" id="NF001965">
    <property type="entry name" value="PRK00742.1"/>
    <property type="match status" value="1"/>
</dbReference>
<dbReference type="NCBIfam" id="NF009206">
    <property type="entry name" value="PRK12555.1"/>
    <property type="match status" value="1"/>
</dbReference>
<dbReference type="PANTHER" id="PTHR42872">
    <property type="entry name" value="PROTEIN-GLUTAMATE METHYLESTERASE/PROTEIN-GLUTAMINE GLUTAMINASE"/>
    <property type="match status" value="1"/>
</dbReference>
<dbReference type="PANTHER" id="PTHR42872:SF6">
    <property type="entry name" value="PROTEIN-GLUTAMATE METHYLESTERASE_PROTEIN-GLUTAMINE GLUTAMINASE"/>
    <property type="match status" value="1"/>
</dbReference>
<dbReference type="Pfam" id="PF01339">
    <property type="entry name" value="CheB_methylest"/>
    <property type="match status" value="1"/>
</dbReference>
<dbReference type="Pfam" id="PF00072">
    <property type="entry name" value="Response_reg"/>
    <property type="match status" value="1"/>
</dbReference>
<dbReference type="PIRSF" id="PIRSF000876">
    <property type="entry name" value="RR_chemtxs_CheB"/>
    <property type="match status" value="1"/>
</dbReference>
<dbReference type="SMART" id="SM00448">
    <property type="entry name" value="REC"/>
    <property type="match status" value="1"/>
</dbReference>
<dbReference type="SUPFAM" id="SSF52172">
    <property type="entry name" value="CheY-like"/>
    <property type="match status" value="1"/>
</dbReference>
<dbReference type="SUPFAM" id="SSF52738">
    <property type="entry name" value="Methylesterase CheB, C-terminal domain"/>
    <property type="match status" value="1"/>
</dbReference>
<dbReference type="PROSITE" id="PS50122">
    <property type="entry name" value="CHEB"/>
    <property type="match status" value="1"/>
</dbReference>
<dbReference type="PROSITE" id="PS50110">
    <property type="entry name" value="RESPONSE_REGULATORY"/>
    <property type="match status" value="1"/>
</dbReference>
<sequence>MAIRVLIVDDSATARTVLKDVLSKDSEIEVIATAPDAYVARDKIVQLKPDVICLDVEMPRMDGISFLKKIMKYFPTPVLMVSSLTQDGAQVTFDALEAGAIDYVAKPHSNIYDGIDEIQKELIQKVKMVASSNLSARIEAAKAKTSTLEYKPKATYSLAQTTNKLIAIGASTGGTVALAELIARFTKDTPGVVVVQHMPSGFTNSFAQRLNSLCEVEVKEAEDGDIIGRGRVLVAPGDLHMVVRRDGGNYRVKLGTGEKISGHRPSVDVLFNSVASHVGSNAIGVLLTGMGSDGAKGMLKMKTSGASTIAQDEKSSIVWGMPKVAYEIGAVDFVEPLSNIDVKIASLLSERK</sequence>
<gene>
    <name evidence="1" type="primary">cheB</name>
    <name type="ordered locus">Suden_0978</name>
</gene>
<accession>Q30RX5</accession>
<proteinExistence type="inferred from homology"/>
<protein>
    <recommendedName>
        <fullName evidence="1">Protein-glutamate methylesterase/protein-glutamine glutaminase</fullName>
        <ecNumber evidence="1">3.1.1.61</ecNumber>
        <ecNumber evidence="1">3.5.1.44</ecNumber>
    </recommendedName>
</protein>
<keyword id="KW-0145">Chemotaxis</keyword>
<keyword id="KW-0963">Cytoplasm</keyword>
<keyword id="KW-0378">Hydrolase</keyword>
<keyword id="KW-0597">Phosphoprotein</keyword>
<keyword id="KW-1185">Reference proteome</keyword>